<sequence>MNVLSCSINTLIKEGLYEISGVEVGQHFYWQIGGFQVHAQVLITSWVVIAILLGSAVLAIRNPQTIPTDGQNFFEFVLEFIRDVSKTQIGEEYGPWVPFIGTLFLFIFVSNWSGALLPWKIIQLPQGELAAPTNDINTTVALALLTSAAYFYAGLSKKGLGYFSKYIQPTPILLPINILEDFTKPLSLSFRLFGNILADELVVVVLVSLVPLVVPIPVMFLGLFTSGIQALIFATLAAAYIGESMEGHH</sequence>
<gene>
    <name evidence="1" type="primary">atpI</name>
</gene>
<feature type="chain" id="PRO_0000362535" description="ATP synthase subunit a, chloroplastic">
    <location>
        <begin position="1"/>
        <end position="249"/>
    </location>
</feature>
<feature type="transmembrane region" description="Helical" evidence="1">
    <location>
        <begin position="40"/>
        <end position="60"/>
    </location>
</feature>
<feature type="transmembrane region" description="Helical" evidence="1">
    <location>
        <begin position="97"/>
        <end position="117"/>
    </location>
</feature>
<feature type="transmembrane region" description="Helical" evidence="1">
    <location>
        <begin position="136"/>
        <end position="156"/>
    </location>
</feature>
<feature type="transmembrane region" description="Helical" evidence="1">
    <location>
        <begin position="201"/>
        <end position="221"/>
    </location>
</feature>
<feature type="transmembrane region" description="Helical" evidence="1">
    <location>
        <begin position="222"/>
        <end position="242"/>
    </location>
</feature>
<accession>A4QKI0</accession>
<geneLocation type="chloroplast"/>
<protein>
    <recommendedName>
        <fullName evidence="1">ATP synthase subunit a, chloroplastic</fullName>
    </recommendedName>
    <alternativeName>
        <fullName evidence="1">ATP synthase F0 sector subunit a</fullName>
    </alternativeName>
    <alternativeName>
        <fullName evidence="1">F-ATPase subunit IV</fullName>
    </alternativeName>
</protein>
<proteinExistence type="inferred from homology"/>
<dbReference type="EMBL" id="AP009371">
    <property type="protein sequence ID" value="BAF50185.1"/>
    <property type="molecule type" value="Genomic_DNA"/>
</dbReference>
<dbReference type="RefSeq" id="YP_001123361.1">
    <property type="nucleotide sequence ID" value="NC_009270.1"/>
</dbReference>
<dbReference type="SMR" id="A4QKI0"/>
<dbReference type="GeneID" id="4961730"/>
<dbReference type="GO" id="GO:0009535">
    <property type="term" value="C:chloroplast thylakoid membrane"/>
    <property type="evidence" value="ECO:0007669"/>
    <property type="project" value="UniProtKB-SubCell"/>
</dbReference>
<dbReference type="GO" id="GO:0005886">
    <property type="term" value="C:plasma membrane"/>
    <property type="evidence" value="ECO:0007669"/>
    <property type="project" value="UniProtKB-UniRule"/>
</dbReference>
<dbReference type="GO" id="GO:0045259">
    <property type="term" value="C:proton-transporting ATP synthase complex"/>
    <property type="evidence" value="ECO:0007669"/>
    <property type="project" value="UniProtKB-KW"/>
</dbReference>
<dbReference type="GO" id="GO:0046933">
    <property type="term" value="F:proton-transporting ATP synthase activity, rotational mechanism"/>
    <property type="evidence" value="ECO:0007669"/>
    <property type="project" value="UniProtKB-UniRule"/>
</dbReference>
<dbReference type="CDD" id="cd00310">
    <property type="entry name" value="ATP-synt_Fo_a_6"/>
    <property type="match status" value="1"/>
</dbReference>
<dbReference type="FunFam" id="1.20.120.220:FF:000001">
    <property type="entry name" value="ATP synthase subunit a, chloroplastic"/>
    <property type="match status" value="1"/>
</dbReference>
<dbReference type="Gene3D" id="1.20.120.220">
    <property type="entry name" value="ATP synthase, F0 complex, subunit A"/>
    <property type="match status" value="1"/>
</dbReference>
<dbReference type="HAMAP" id="MF_01393">
    <property type="entry name" value="ATP_synth_a_bact"/>
    <property type="match status" value="1"/>
</dbReference>
<dbReference type="InterPro" id="IPR045082">
    <property type="entry name" value="ATP_syn_F0_a_bact/chloroplast"/>
</dbReference>
<dbReference type="InterPro" id="IPR000568">
    <property type="entry name" value="ATP_synth_F0_asu"/>
</dbReference>
<dbReference type="InterPro" id="IPR023011">
    <property type="entry name" value="ATP_synth_F0_asu_AS"/>
</dbReference>
<dbReference type="InterPro" id="IPR035908">
    <property type="entry name" value="F0_ATP_A_sf"/>
</dbReference>
<dbReference type="NCBIfam" id="TIGR01131">
    <property type="entry name" value="ATP_synt_6_or_A"/>
    <property type="match status" value="1"/>
</dbReference>
<dbReference type="PANTHER" id="PTHR42823">
    <property type="entry name" value="ATP SYNTHASE SUBUNIT A, CHLOROPLASTIC"/>
    <property type="match status" value="1"/>
</dbReference>
<dbReference type="PANTHER" id="PTHR42823:SF3">
    <property type="entry name" value="ATP SYNTHASE SUBUNIT A, CHLOROPLASTIC"/>
    <property type="match status" value="1"/>
</dbReference>
<dbReference type="Pfam" id="PF00119">
    <property type="entry name" value="ATP-synt_A"/>
    <property type="match status" value="1"/>
</dbReference>
<dbReference type="PRINTS" id="PR00123">
    <property type="entry name" value="ATPASEA"/>
</dbReference>
<dbReference type="SUPFAM" id="SSF81336">
    <property type="entry name" value="F1F0 ATP synthase subunit A"/>
    <property type="match status" value="1"/>
</dbReference>
<dbReference type="PROSITE" id="PS00449">
    <property type="entry name" value="ATPASE_A"/>
    <property type="match status" value="1"/>
</dbReference>
<keyword id="KW-0066">ATP synthesis</keyword>
<keyword id="KW-0138">CF(0)</keyword>
<keyword id="KW-0150">Chloroplast</keyword>
<keyword id="KW-0375">Hydrogen ion transport</keyword>
<keyword id="KW-0406">Ion transport</keyword>
<keyword id="KW-0472">Membrane</keyword>
<keyword id="KW-0934">Plastid</keyword>
<keyword id="KW-0793">Thylakoid</keyword>
<keyword id="KW-0812">Transmembrane</keyword>
<keyword id="KW-1133">Transmembrane helix</keyword>
<keyword id="KW-0813">Transport</keyword>
<name>ATPI_CAPBU</name>
<organism>
    <name type="scientific">Capsella bursa-pastoris</name>
    <name type="common">Shepherd's purse</name>
    <name type="synonym">Thlaspi bursa-pastoris</name>
    <dbReference type="NCBI Taxonomy" id="3719"/>
    <lineage>
        <taxon>Eukaryota</taxon>
        <taxon>Viridiplantae</taxon>
        <taxon>Streptophyta</taxon>
        <taxon>Embryophyta</taxon>
        <taxon>Tracheophyta</taxon>
        <taxon>Spermatophyta</taxon>
        <taxon>Magnoliopsida</taxon>
        <taxon>eudicotyledons</taxon>
        <taxon>Gunneridae</taxon>
        <taxon>Pentapetalae</taxon>
        <taxon>rosids</taxon>
        <taxon>malvids</taxon>
        <taxon>Brassicales</taxon>
        <taxon>Brassicaceae</taxon>
        <taxon>Camelineae</taxon>
        <taxon>Capsella</taxon>
    </lineage>
</organism>
<comment type="function">
    <text evidence="1">Key component of the proton channel; it plays a direct role in the translocation of protons across the membrane.</text>
</comment>
<comment type="subunit">
    <text evidence="1">F-type ATPases have 2 components, CF(1) - the catalytic core - and CF(0) - the membrane proton channel. CF(1) has five subunits: alpha(3), beta(3), gamma(1), delta(1), epsilon(1). CF(0) has four main subunits: a, b, b' and c.</text>
</comment>
<comment type="subcellular location">
    <subcellularLocation>
        <location evidence="1">Plastid</location>
        <location evidence="1">Chloroplast thylakoid membrane</location>
        <topology evidence="1">Multi-pass membrane protein</topology>
    </subcellularLocation>
</comment>
<comment type="similarity">
    <text evidence="1">Belongs to the ATPase A chain family.</text>
</comment>
<evidence type="ECO:0000255" key="1">
    <source>
        <dbReference type="HAMAP-Rule" id="MF_01393"/>
    </source>
</evidence>
<reference key="1">
    <citation type="submission" date="2007-03" db="EMBL/GenBank/DDBJ databases">
        <title>Sequencing analysis of Capsella bursa-pastoris JO22 chloroplast DNA.</title>
        <authorList>
            <person name="Hosouchi T."/>
            <person name="Tsuruoka H."/>
            <person name="Kotani H."/>
        </authorList>
    </citation>
    <scope>NUCLEOTIDE SEQUENCE [LARGE SCALE GENOMIC DNA]</scope>
</reference>